<name>IMDH2_YEAST</name>
<keyword id="KW-0129">CBS domain</keyword>
<keyword id="KW-0963">Cytoplasm</keyword>
<keyword id="KW-0332">GMP biosynthesis</keyword>
<keyword id="KW-0479">Metal-binding</keyword>
<keyword id="KW-0520">NAD</keyword>
<keyword id="KW-0560">Oxidoreductase</keyword>
<keyword id="KW-0630">Potassium</keyword>
<keyword id="KW-0658">Purine biosynthesis</keyword>
<keyword id="KW-1185">Reference proteome</keyword>
<keyword id="KW-0677">Repeat</keyword>
<sequence length="523" mass="56530">MAAIRDYKTALDFTKSLPRPDGLSVQELMDSKIRGGLTYNDFLILPGLVDFASSEVSLQTKLTRNITLNIPLVSSPMDTVTESEMATFMALLGGIGFIHHNCTPEDQADMVRRVKNYENGFINNPIVISPTTTVGEAKSMKEKYGFAGFPVTTDGKRNAKLVGVITSRDIQFVEDNSLLVQDVMTKNPVTGAQGITLSEGNEILKKIKKGRLLVVDEKGNLVSMLSRTDLMKNQNYPLASKSANTKQLLCGASIGTMDADKERLRLLVKAGLDVVILDSSQGNSIFELNMLKWVKESFPGLEVIAGNVVTREQAANLIAAGADGLRIGMGTGSICITQEVMACGRPQGTAVYNVCEFANQFGVPCMADGGVQNIGHITKALALGSSTVMMGGMLAGTTESPGEYFYQDGKRLKAYRGMGSIDAMQKTGTKGNASTSRYFSESDSVLVAQGVSGAVVDKGSIKKFIPYLYNGLQHSCQDIGCRSLTLLKNNVQRGKVRFEFRTASAQLEGGVHNLHSYEKRLHN</sequence>
<comment type="function">
    <text evidence="1 2 5 6">Catalyzes the conversion of inosine 5'-phosphate (IMP) to xanthosine 5'-phosphate (XMP), the first committed and rate-limiting step in the de novo synthesis of guanine nucleotides, and therefore plays an important role in the regulation of cell growth. In contrast to the other IMPDH alleles IMD3 and IMD4, the enzymatic activity of IMD2 seems to be intrinsically drug resistant.</text>
</comment>
<comment type="catalytic activity">
    <reaction evidence="1">
        <text>IMP + NAD(+) + H2O = XMP + NADH + H(+)</text>
        <dbReference type="Rhea" id="RHEA:11708"/>
        <dbReference type="ChEBI" id="CHEBI:15377"/>
        <dbReference type="ChEBI" id="CHEBI:15378"/>
        <dbReference type="ChEBI" id="CHEBI:57464"/>
        <dbReference type="ChEBI" id="CHEBI:57540"/>
        <dbReference type="ChEBI" id="CHEBI:57945"/>
        <dbReference type="ChEBI" id="CHEBI:58053"/>
        <dbReference type="EC" id="1.1.1.205"/>
    </reaction>
</comment>
<comment type="cofactor">
    <cofactor evidence="1">
        <name>K(+)</name>
        <dbReference type="ChEBI" id="CHEBI:29103"/>
    </cofactor>
</comment>
<comment type="activity regulation">
    <text evidence="1">Mycophenolic acid (MPA) is a non-competitive inhibitor that prevents formation of the closed enzyme conformation by binding to the same site as the amobile flap. In contrast, mizoribine monophosphate (MZP) is a competitive inhibitor that induces the closed conformation. MPA is a potent inhibitor of mammalian IMPDHs but a poor inhibitor of the bacterial enzymes. MZP is a more potent inhibitor of bacterial IMPDH.</text>
</comment>
<comment type="pathway">
    <text evidence="1">Purine metabolism; XMP biosynthesis via de novo pathway; XMP from IMP: step 1/1.</text>
</comment>
<comment type="subunit">
    <text evidence="1 5">Homotetramer. Seems to be able to form heterotetramers composed from more than 1 of the 3 IMPDH gene products (IMD2-4).</text>
</comment>
<comment type="subcellular location">
    <subcellularLocation>
        <location evidence="1 3">Cytoplasm</location>
    </subcellularLocation>
</comment>
<comment type="induction">
    <text evidence="2">Induced by MPA resulting in resistance to the drug. Repressed by nutrient limitation.</text>
</comment>
<comment type="miscellaneous">
    <text evidence="4">Present with 7870 molecules/cell in log phase SD medium.</text>
</comment>
<comment type="similarity">
    <text evidence="1">Belongs to the IMPDH/GMPR family.</text>
</comment>
<evidence type="ECO:0000255" key="1">
    <source>
        <dbReference type="HAMAP-Rule" id="MF_03156"/>
    </source>
</evidence>
<evidence type="ECO:0000269" key="2">
    <source>
    </source>
</evidence>
<evidence type="ECO:0000269" key="3">
    <source>
    </source>
</evidence>
<evidence type="ECO:0000269" key="4">
    <source>
    </source>
</evidence>
<evidence type="ECO:0000269" key="5">
    <source>
    </source>
</evidence>
<evidence type="ECO:0000269" key="6">
    <source>
    </source>
</evidence>
<accession>P38697</accession>
<accession>D3DLH1</accession>
<gene>
    <name evidence="1" type="primary">IMD2</name>
    <name type="synonym">PUR5</name>
    <name type="ordered locus">YHR216W</name>
</gene>
<organism>
    <name type="scientific">Saccharomyces cerevisiae (strain ATCC 204508 / S288c)</name>
    <name type="common">Baker's yeast</name>
    <dbReference type="NCBI Taxonomy" id="559292"/>
    <lineage>
        <taxon>Eukaryota</taxon>
        <taxon>Fungi</taxon>
        <taxon>Dikarya</taxon>
        <taxon>Ascomycota</taxon>
        <taxon>Saccharomycotina</taxon>
        <taxon>Saccharomycetes</taxon>
        <taxon>Saccharomycetales</taxon>
        <taxon>Saccharomycetaceae</taxon>
        <taxon>Saccharomyces</taxon>
    </lineage>
</organism>
<proteinExistence type="evidence at protein level"/>
<feature type="chain" id="PRO_0000093682" description="Inosine-5'-monophosphate dehydrogenase 2">
    <location>
        <begin position="1"/>
        <end position="523"/>
    </location>
</feature>
<feature type="domain" description="CBS 1" evidence="1">
    <location>
        <begin position="121"/>
        <end position="183"/>
    </location>
</feature>
<feature type="domain" description="CBS 2" evidence="1">
    <location>
        <begin position="184"/>
        <end position="240"/>
    </location>
</feature>
<feature type="active site" description="Thioimidate intermediate" evidence="1">
    <location>
        <position position="335"/>
    </location>
</feature>
<feature type="active site" description="Proton acceptor" evidence="1">
    <location>
        <position position="437"/>
    </location>
</feature>
<feature type="binding site" evidence="1">
    <location>
        <begin position="278"/>
        <end position="280"/>
    </location>
    <ligand>
        <name>NAD(+)</name>
        <dbReference type="ChEBI" id="CHEBI:57540"/>
    </ligand>
</feature>
<feature type="binding site" evidence="1">
    <location>
        <begin position="328"/>
        <end position="330"/>
    </location>
    <ligand>
        <name>NAD(+)</name>
        <dbReference type="ChEBI" id="CHEBI:57540"/>
    </ligand>
</feature>
<feature type="binding site" description="in other chain" evidence="1">
    <location>
        <position position="330"/>
    </location>
    <ligand>
        <name>K(+)</name>
        <dbReference type="ChEBI" id="CHEBI:29103"/>
        <note>ligand shared between two tetrameric partners</note>
    </ligand>
</feature>
<feature type="binding site" description="in other chain" evidence="1">
    <location>
        <position position="332"/>
    </location>
    <ligand>
        <name>K(+)</name>
        <dbReference type="ChEBI" id="CHEBI:29103"/>
        <note>ligand shared between two tetrameric partners</note>
    </ligand>
</feature>
<feature type="binding site" evidence="1">
    <location>
        <position position="333"/>
    </location>
    <ligand>
        <name>IMP</name>
        <dbReference type="ChEBI" id="CHEBI:58053"/>
    </ligand>
</feature>
<feature type="binding site" description="in other chain" evidence="1">
    <location>
        <position position="335"/>
    </location>
    <ligand>
        <name>K(+)</name>
        <dbReference type="ChEBI" id="CHEBI:29103"/>
        <note>ligand shared between two tetrameric partners</note>
    </ligand>
</feature>
<feature type="binding site" evidence="1">
    <location>
        <begin position="368"/>
        <end position="370"/>
    </location>
    <ligand>
        <name>IMP</name>
        <dbReference type="ChEBI" id="CHEBI:58053"/>
    </ligand>
</feature>
<feature type="binding site" evidence="1">
    <location>
        <begin position="391"/>
        <end position="392"/>
    </location>
    <ligand>
        <name>IMP</name>
        <dbReference type="ChEBI" id="CHEBI:58053"/>
    </ligand>
</feature>
<feature type="binding site" evidence="1">
    <location>
        <begin position="415"/>
        <end position="419"/>
    </location>
    <ligand>
        <name>IMP</name>
        <dbReference type="ChEBI" id="CHEBI:58053"/>
    </ligand>
</feature>
<feature type="binding site" evidence="1">
    <location>
        <position position="449"/>
    </location>
    <ligand>
        <name>IMP</name>
        <dbReference type="ChEBI" id="CHEBI:58053"/>
    </ligand>
</feature>
<feature type="binding site" evidence="1">
    <location>
        <position position="508"/>
    </location>
    <ligand>
        <name>K(+)</name>
        <dbReference type="ChEBI" id="CHEBI:29103"/>
        <note>ligand shared between two tetrameric partners</note>
    </ligand>
</feature>
<feature type="binding site" evidence="1">
    <location>
        <position position="509"/>
    </location>
    <ligand>
        <name>K(+)</name>
        <dbReference type="ChEBI" id="CHEBI:29103"/>
        <note>ligand shared between two tetrameric partners</note>
    </ligand>
</feature>
<feature type="binding site" evidence="1">
    <location>
        <position position="510"/>
    </location>
    <ligand>
        <name>K(+)</name>
        <dbReference type="ChEBI" id="CHEBI:29103"/>
        <note>ligand shared between two tetrameric partners</note>
    </ligand>
</feature>
<feature type="mutagenesis site" description="Reduces drug-resistance to MPA." evidence="6">
    <original>S</original>
    <variation>A</variation>
    <location>
        <position position="253"/>
    </location>
</feature>
<feature type="mutagenesis site" description="Inactivates the proteins ability to provide drug-resistance in vivo." evidence="5">
    <original>C</original>
    <variation>A</variation>
    <location>
        <position position="335"/>
    </location>
</feature>
<dbReference type="EC" id="1.1.1.205" evidence="1"/>
<dbReference type="EMBL" id="U00029">
    <property type="protein sequence ID" value="AAB69728.1"/>
    <property type="molecule type" value="Genomic_DNA"/>
</dbReference>
<dbReference type="EMBL" id="BK006934">
    <property type="protein sequence ID" value="DAA06915.1"/>
    <property type="molecule type" value="Genomic_DNA"/>
</dbReference>
<dbReference type="PIR" id="S48997">
    <property type="entry name" value="S48997"/>
</dbReference>
<dbReference type="RefSeq" id="NP_012088.3">
    <property type="nucleotide sequence ID" value="NM_001179347.3"/>
</dbReference>
<dbReference type="SMR" id="P38697"/>
<dbReference type="BioGRID" id="36651">
    <property type="interactions" value="125"/>
</dbReference>
<dbReference type="DIP" id="DIP-2840N"/>
<dbReference type="FunCoup" id="P38697">
    <property type="interactions" value="986"/>
</dbReference>
<dbReference type="IntAct" id="P38697">
    <property type="interactions" value="42"/>
</dbReference>
<dbReference type="MINT" id="P38697"/>
<dbReference type="STRING" id="4932.YHR216W"/>
<dbReference type="iPTMnet" id="P38697"/>
<dbReference type="PaxDb" id="4932-YHR216W"/>
<dbReference type="PeptideAtlas" id="P38697"/>
<dbReference type="EnsemblFungi" id="YHR216W_mRNA">
    <property type="protein sequence ID" value="YHR216W"/>
    <property type="gene ID" value="YHR216W"/>
</dbReference>
<dbReference type="GeneID" id="856626"/>
<dbReference type="KEGG" id="sce:YHR216W"/>
<dbReference type="AGR" id="SGD:S000001259"/>
<dbReference type="SGD" id="S000001259">
    <property type="gene designation" value="IMD2"/>
</dbReference>
<dbReference type="VEuPathDB" id="FungiDB:YHR216W"/>
<dbReference type="eggNOG" id="KOG2550">
    <property type="taxonomic scope" value="Eukaryota"/>
</dbReference>
<dbReference type="GeneTree" id="ENSGT00940000170207"/>
<dbReference type="HOGENOM" id="CLU_022552_2_1_1"/>
<dbReference type="InParanoid" id="P38697"/>
<dbReference type="OMA" id="PGSHCTT"/>
<dbReference type="OrthoDB" id="416622at2759"/>
<dbReference type="BioCyc" id="YEAST:YHR216W-MONOMER"/>
<dbReference type="Reactome" id="R-SCE-6798695">
    <property type="pathway name" value="Neutrophil degranulation"/>
</dbReference>
<dbReference type="Reactome" id="R-SCE-73817">
    <property type="pathway name" value="Purine ribonucleoside monophosphate biosynthesis"/>
</dbReference>
<dbReference type="Reactome" id="R-SCE-9748787">
    <property type="pathway name" value="Azathioprine ADME"/>
</dbReference>
<dbReference type="SABIO-RK" id="P38697"/>
<dbReference type="UniPathway" id="UPA00601">
    <property type="reaction ID" value="UER00295"/>
</dbReference>
<dbReference type="BioGRID-ORCS" id="856626">
    <property type="hits" value="0 hits in 10 CRISPR screens"/>
</dbReference>
<dbReference type="PRO" id="PR:P38697"/>
<dbReference type="Proteomes" id="UP000002311">
    <property type="component" value="Chromosome VIII"/>
</dbReference>
<dbReference type="RNAct" id="P38697">
    <property type="molecule type" value="protein"/>
</dbReference>
<dbReference type="GO" id="GO:0000785">
    <property type="term" value="C:chromatin"/>
    <property type="evidence" value="ECO:0000314"/>
    <property type="project" value="SGD"/>
</dbReference>
<dbReference type="GO" id="GO:0005737">
    <property type="term" value="C:cytoplasm"/>
    <property type="evidence" value="ECO:0000314"/>
    <property type="project" value="SGD"/>
</dbReference>
<dbReference type="GO" id="GO:0003682">
    <property type="term" value="F:chromatin binding"/>
    <property type="evidence" value="ECO:0000314"/>
    <property type="project" value="SGD"/>
</dbReference>
<dbReference type="GO" id="GO:0003938">
    <property type="term" value="F:IMP dehydrogenase activity"/>
    <property type="evidence" value="ECO:0000318"/>
    <property type="project" value="GO_Central"/>
</dbReference>
<dbReference type="GO" id="GO:0046872">
    <property type="term" value="F:metal ion binding"/>
    <property type="evidence" value="ECO:0007669"/>
    <property type="project" value="UniProtKB-UniRule"/>
</dbReference>
<dbReference type="GO" id="GO:0003729">
    <property type="term" value="F:mRNA binding"/>
    <property type="evidence" value="ECO:0007005"/>
    <property type="project" value="SGD"/>
</dbReference>
<dbReference type="GO" id="GO:0000166">
    <property type="term" value="F:nucleotide binding"/>
    <property type="evidence" value="ECO:0007669"/>
    <property type="project" value="UniProtKB-UniRule"/>
</dbReference>
<dbReference type="GO" id="GO:0006177">
    <property type="term" value="P:GMP biosynthetic process"/>
    <property type="evidence" value="ECO:0007669"/>
    <property type="project" value="UniProtKB-UniRule"/>
</dbReference>
<dbReference type="GO" id="GO:0006183">
    <property type="term" value="P:GTP biosynthetic process"/>
    <property type="evidence" value="ECO:0000318"/>
    <property type="project" value="GO_Central"/>
</dbReference>
<dbReference type="CDD" id="cd04601">
    <property type="entry name" value="CBS_pair_IMPDH"/>
    <property type="match status" value="1"/>
</dbReference>
<dbReference type="CDD" id="cd00381">
    <property type="entry name" value="IMPDH"/>
    <property type="match status" value="1"/>
</dbReference>
<dbReference type="FunFam" id="3.20.20.70:FF:000007">
    <property type="entry name" value="Chromosome 19 SCAF14664, whole genome shotgun sequence"/>
    <property type="match status" value="1"/>
</dbReference>
<dbReference type="Gene3D" id="3.20.20.70">
    <property type="entry name" value="Aldolase class I"/>
    <property type="match status" value="1"/>
</dbReference>
<dbReference type="HAMAP" id="MF_01964">
    <property type="entry name" value="IMPDH"/>
    <property type="match status" value="1"/>
</dbReference>
<dbReference type="InterPro" id="IPR013785">
    <property type="entry name" value="Aldolase_TIM"/>
</dbReference>
<dbReference type="InterPro" id="IPR000644">
    <property type="entry name" value="CBS_dom"/>
</dbReference>
<dbReference type="InterPro" id="IPR046342">
    <property type="entry name" value="CBS_dom_sf"/>
</dbReference>
<dbReference type="InterPro" id="IPR005990">
    <property type="entry name" value="IMP_DH"/>
</dbReference>
<dbReference type="InterPro" id="IPR015875">
    <property type="entry name" value="IMP_DH/GMP_Rdtase_CS"/>
</dbReference>
<dbReference type="InterPro" id="IPR001093">
    <property type="entry name" value="IMP_DH_GMPRt"/>
</dbReference>
<dbReference type="NCBIfam" id="TIGR01302">
    <property type="entry name" value="IMP_dehydrog"/>
    <property type="match status" value="1"/>
</dbReference>
<dbReference type="PANTHER" id="PTHR11911:SF111">
    <property type="entry name" value="INOSINE-5'-MONOPHOSPHATE DEHYDROGENASE"/>
    <property type="match status" value="1"/>
</dbReference>
<dbReference type="PANTHER" id="PTHR11911">
    <property type="entry name" value="INOSINE-5-MONOPHOSPHATE DEHYDROGENASE RELATED"/>
    <property type="match status" value="1"/>
</dbReference>
<dbReference type="Pfam" id="PF00571">
    <property type="entry name" value="CBS"/>
    <property type="match status" value="2"/>
</dbReference>
<dbReference type="Pfam" id="PF00478">
    <property type="entry name" value="IMPDH"/>
    <property type="match status" value="1"/>
</dbReference>
<dbReference type="PIRSF" id="PIRSF000130">
    <property type="entry name" value="IMPDH"/>
    <property type="match status" value="1"/>
</dbReference>
<dbReference type="SMART" id="SM00116">
    <property type="entry name" value="CBS"/>
    <property type="match status" value="2"/>
</dbReference>
<dbReference type="SMART" id="SM01240">
    <property type="entry name" value="IMPDH"/>
    <property type="match status" value="1"/>
</dbReference>
<dbReference type="SUPFAM" id="SSF54631">
    <property type="entry name" value="CBS-domain pair"/>
    <property type="match status" value="1"/>
</dbReference>
<dbReference type="SUPFAM" id="SSF51412">
    <property type="entry name" value="Inosine monophosphate dehydrogenase (IMPDH)"/>
    <property type="match status" value="1"/>
</dbReference>
<dbReference type="PROSITE" id="PS51371">
    <property type="entry name" value="CBS"/>
    <property type="match status" value="2"/>
</dbReference>
<dbReference type="PROSITE" id="PS00487">
    <property type="entry name" value="IMP_DH_GMP_RED"/>
    <property type="match status" value="1"/>
</dbReference>
<reference key="1">
    <citation type="journal article" date="1994" name="Science">
        <title>Complete nucleotide sequence of Saccharomyces cerevisiae chromosome VIII.</title>
        <authorList>
            <person name="Johnston M."/>
            <person name="Andrews S."/>
            <person name="Brinkman R."/>
            <person name="Cooper J."/>
            <person name="Ding H."/>
            <person name="Dover J."/>
            <person name="Du Z."/>
            <person name="Favello A."/>
            <person name="Fulton L."/>
            <person name="Gattung S."/>
            <person name="Geisel C."/>
            <person name="Kirsten J."/>
            <person name="Kucaba T."/>
            <person name="Hillier L.W."/>
            <person name="Jier M."/>
            <person name="Johnston L."/>
            <person name="Langston Y."/>
            <person name="Latreille P."/>
            <person name="Louis E.J."/>
            <person name="Macri C."/>
            <person name="Mardis E."/>
            <person name="Menezes S."/>
            <person name="Mouser L."/>
            <person name="Nhan M."/>
            <person name="Rifkin L."/>
            <person name="Riles L."/>
            <person name="St Peter H."/>
            <person name="Trevaskis E."/>
            <person name="Vaughan K."/>
            <person name="Vignati D."/>
            <person name="Wilcox L."/>
            <person name="Wohldman P."/>
            <person name="Waterston R."/>
            <person name="Wilson R."/>
            <person name="Vaudin M."/>
        </authorList>
    </citation>
    <scope>NUCLEOTIDE SEQUENCE [LARGE SCALE GENOMIC DNA]</scope>
    <source>
        <strain>ATCC 204508 / S288c</strain>
    </source>
</reference>
<reference key="2">
    <citation type="journal article" date="2014" name="G3 (Bethesda)">
        <title>The reference genome sequence of Saccharomyces cerevisiae: Then and now.</title>
        <authorList>
            <person name="Engel S.R."/>
            <person name="Dietrich F.S."/>
            <person name="Fisk D.G."/>
            <person name="Binkley G."/>
            <person name="Balakrishnan R."/>
            <person name="Costanzo M.C."/>
            <person name="Dwight S.S."/>
            <person name="Hitz B.C."/>
            <person name="Karra K."/>
            <person name="Nash R.S."/>
            <person name="Weng S."/>
            <person name="Wong E.D."/>
            <person name="Lloyd P."/>
            <person name="Skrzypek M.S."/>
            <person name="Miyasato S.R."/>
            <person name="Simison M."/>
            <person name="Cherry J.M."/>
        </authorList>
    </citation>
    <scope>GENOME REANNOTATION</scope>
    <source>
        <strain>ATCC 204508 / S288c</strain>
    </source>
</reference>
<reference key="3">
    <citation type="journal article" date="2003" name="Nature">
        <title>Global analysis of protein localization in budding yeast.</title>
        <authorList>
            <person name="Huh W.-K."/>
            <person name="Falvo J.V."/>
            <person name="Gerke L.C."/>
            <person name="Carroll A.S."/>
            <person name="Howson R.W."/>
            <person name="Weissman J.S."/>
            <person name="O'Shea E.K."/>
        </authorList>
    </citation>
    <scope>SUBCELLULAR LOCATION [LARGE SCALE ANALYSIS]</scope>
</reference>
<reference key="4">
    <citation type="journal article" date="2003" name="Nature">
        <title>Global analysis of protein expression in yeast.</title>
        <authorList>
            <person name="Ghaemmaghami S."/>
            <person name="Huh W.-K."/>
            <person name="Bower K."/>
            <person name="Howson R.W."/>
            <person name="Belle A."/>
            <person name="Dephoure N."/>
            <person name="O'Shea E.K."/>
            <person name="Weissman J.S."/>
        </authorList>
    </citation>
    <scope>LEVEL OF PROTEIN EXPRESSION [LARGE SCALE ANALYSIS]</scope>
</reference>
<reference key="5">
    <citation type="journal article" date="2003" name="J. Biol. Chem.">
        <title>Functional distinctions between IMP dehydrogenase genes in providing mycophenolate resistance and guanine prototrophy to yeast.</title>
        <authorList>
            <person name="Hyle J.W."/>
            <person name="Shaw R.J."/>
            <person name="Reines D."/>
        </authorList>
    </citation>
    <scope>FUNCTION</scope>
    <scope>INDUCTION</scope>
</reference>
<reference key="6">
    <citation type="journal article" date="2004" name="Proc. Natl. Acad. Sci. U.S.A.">
        <title>Detection of the mycophenolate-inhibited form of IMP dehydrogenase in vivo.</title>
        <authorList>
            <person name="McPhillips C.C."/>
            <person name="Hyle J.W."/>
            <person name="Reines D."/>
        </authorList>
    </citation>
    <scope>FUNCTION</scope>
    <scope>MUTAGENESIS OF CYS-335</scope>
    <scope>SUBUNIT</scope>
</reference>
<reference key="7">
    <citation type="journal article" date="2005" name="Yeast">
        <title>Dissection of the molecular basis of mycophenolate resistance in Saccharomyces cerevisiae.</title>
        <authorList>
            <person name="Jenks M.H."/>
            <person name="Reines D."/>
        </authorList>
    </citation>
    <scope>FUNCTION</scope>
    <scope>MUTAGENESIS OF SER-253</scope>
</reference>
<protein>
    <recommendedName>
        <fullName evidence="1">Inosine-5'-monophosphate dehydrogenase 2</fullName>
        <shortName evidence="1">IMP dehydrogenase 2</shortName>
        <shortName evidence="1">IMPD 2</shortName>
        <shortName evidence="1">IMPDH 2</shortName>
        <ecNumber evidence="1">1.1.1.205</ecNumber>
    </recommendedName>
</protein>